<sequence>MDNMNHEELNDQLLVRREKLHNLREQGIDPFGKRFERTNATNDLLSLYGEFSKEELEEKEISVSIAGRIMTKRGKGKAGFAHIQDLHGQVQIYVRKDAVGDEEYELFKTADLGDLVGIEGKVFKTNVGELSVKATGFTLLTKSLRPLPDKYHGLKDVEQRYRQRYLDLITSMESRETFVTRSKIIREMRRYLDDNGYLEVETPMMHAIAGGASARPFITHHNALDMELYMRIAIELHLKRLIVGGLEKVYEIGRVFRNEGVSTRHNPEFTMIELYEAYADYKDIMKLTENMVAHIAKQVLGTTTIQYGDYEINLEPEWTRLHMVDAIKEHSGADFWNPMSVEEARELAKEHNVEIKDTMEVGHIINEFFEQKVEDKLIQPTFIYGHPVEISPLAKKNDEDPRFTDRFELFIVAREHANAFTELNDPIDQKERFEAQLKEREQGNDEAHMMDDDYIEALEYGMPPTGGLGIGIDRLVMLLTNAPSIRDVLLFPAMRHKQD</sequence>
<comment type="catalytic activity">
    <reaction evidence="1">
        <text>tRNA(Lys) + L-lysine + ATP = L-lysyl-tRNA(Lys) + AMP + diphosphate</text>
        <dbReference type="Rhea" id="RHEA:20792"/>
        <dbReference type="Rhea" id="RHEA-COMP:9696"/>
        <dbReference type="Rhea" id="RHEA-COMP:9697"/>
        <dbReference type="ChEBI" id="CHEBI:30616"/>
        <dbReference type="ChEBI" id="CHEBI:32551"/>
        <dbReference type="ChEBI" id="CHEBI:33019"/>
        <dbReference type="ChEBI" id="CHEBI:78442"/>
        <dbReference type="ChEBI" id="CHEBI:78529"/>
        <dbReference type="ChEBI" id="CHEBI:456215"/>
        <dbReference type="EC" id="6.1.1.6"/>
    </reaction>
</comment>
<comment type="cofactor">
    <cofactor evidence="1">
        <name>Mg(2+)</name>
        <dbReference type="ChEBI" id="CHEBI:18420"/>
    </cofactor>
    <text evidence="1">Binds 3 Mg(2+) ions per subunit.</text>
</comment>
<comment type="subunit">
    <text evidence="1">Homodimer.</text>
</comment>
<comment type="subcellular location">
    <subcellularLocation>
        <location evidence="1">Cytoplasm</location>
    </subcellularLocation>
</comment>
<comment type="similarity">
    <text evidence="1">Belongs to the class-II aminoacyl-tRNA synthetase family.</text>
</comment>
<dbReference type="EC" id="6.1.1.6" evidence="1"/>
<dbReference type="EMBL" id="CP000485">
    <property type="protein sequence ID" value="ABK83492.1"/>
    <property type="molecule type" value="Genomic_DNA"/>
</dbReference>
<dbReference type="RefSeq" id="WP_000369671.1">
    <property type="nucleotide sequence ID" value="NC_008600.1"/>
</dbReference>
<dbReference type="SMR" id="A0R8E9"/>
<dbReference type="GeneID" id="45020119"/>
<dbReference type="KEGG" id="btl:BALH_0075"/>
<dbReference type="HOGENOM" id="CLU_008255_6_0_9"/>
<dbReference type="GO" id="GO:0005829">
    <property type="term" value="C:cytosol"/>
    <property type="evidence" value="ECO:0007669"/>
    <property type="project" value="TreeGrafter"/>
</dbReference>
<dbReference type="GO" id="GO:0005524">
    <property type="term" value="F:ATP binding"/>
    <property type="evidence" value="ECO:0007669"/>
    <property type="project" value="UniProtKB-UniRule"/>
</dbReference>
<dbReference type="GO" id="GO:0140096">
    <property type="term" value="F:catalytic activity, acting on a protein"/>
    <property type="evidence" value="ECO:0007669"/>
    <property type="project" value="UniProtKB-ARBA"/>
</dbReference>
<dbReference type="GO" id="GO:0004824">
    <property type="term" value="F:lysine-tRNA ligase activity"/>
    <property type="evidence" value="ECO:0007669"/>
    <property type="project" value="UniProtKB-UniRule"/>
</dbReference>
<dbReference type="GO" id="GO:0000287">
    <property type="term" value="F:magnesium ion binding"/>
    <property type="evidence" value="ECO:0007669"/>
    <property type="project" value="UniProtKB-UniRule"/>
</dbReference>
<dbReference type="GO" id="GO:0016740">
    <property type="term" value="F:transferase activity"/>
    <property type="evidence" value="ECO:0007669"/>
    <property type="project" value="UniProtKB-ARBA"/>
</dbReference>
<dbReference type="GO" id="GO:0000049">
    <property type="term" value="F:tRNA binding"/>
    <property type="evidence" value="ECO:0007669"/>
    <property type="project" value="TreeGrafter"/>
</dbReference>
<dbReference type="GO" id="GO:0006430">
    <property type="term" value="P:lysyl-tRNA aminoacylation"/>
    <property type="evidence" value="ECO:0007669"/>
    <property type="project" value="UniProtKB-UniRule"/>
</dbReference>
<dbReference type="CDD" id="cd00775">
    <property type="entry name" value="LysRS_core"/>
    <property type="match status" value="1"/>
</dbReference>
<dbReference type="CDD" id="cd04322">
    <property type="entry name" value="LysRS_N"/>
    <property type="match status" value="1"/>
</dbReference>
<dbReference type="FunFam" id="2.40.50.140:FF:000024">
    <property type="entry name" value="Lysine--tRNA ligase"/>
    <property type="match status" value="1"/>
</dbReference>
<dbReference type="FunFam" id="3.30.930.10:FF:000001">
    <property type="entry name" value="Lysine--tRNA ligase"/>
    <property type="match status" value="1"/>
</dbReference>
<dbReference type="Gene3D" id="3.30.930.10">
    <property type="entry name" value="Bira Bifunctional Protein, Domain 2"/>
    <property type="match status" value="1"/>
</dbReference>
<dbReference type="Gene3D" id="2.40.50.140">
    <property type="entry name" value="Nucleic acid-binding proteins"/>
    <property type="match status" value="1"/>
</dbReference>
<dbReference type="HAMAP" id="MF_00252">
    <property type="entry name" value="Lys_tRNA_synth_class2"/>
    <property type="match status" value="1"/>
</dbReference>
<dbReference type="InterPro" id="IPR004364">
    <property type="entry name" value="Aa-tRNA-synt_II"/>
</dbReference>
<dbReference type="InterPro" id="IPR006195">
    <property type="entry name" value="aa-tRNA-synth_II"/>
</dbReference>
<dbReference type="InterPro" id="IPR045864">
    <property type="entry name" value="aa-tRNA-synth_II/BPL/LPL"/>
</dbReference>
<dbReference type="InterPro" id="IPR002313">
    <property type="entry name" value="Lys-tRNA-ligase_II"/>
</dbReference>
<dbReference type="InterPro" id="IPR034762">
    <property type="entry name" value="Lys-tRNA-ligase_II_bac/euk"/>
</dbReference>
<dbReference type="InterPro" id="IPR044136">
    <property type="entry name" value="Lys-tRNA-ligase_II_N"/>
</dbReference>
<dbReference type="InterPro" id="IPR018149">
    <property type="entry name" value="Lys-tRNA-synth_II_C"/>
</dbReference>
<dbReference type="InterPro" id="IPR012340">
    <property type="entry name" value="NA-bd_OB-fold"/>
</dbReference>
<dbReference type="InterPro" id="IPR004365">
    <property type="entry name" value="NA-bd_OB_tRNA"/>
</dbReference>
<dbReference type="NCBIfam" id="TIGR00499">
    <property type="entry name" value="lysS_bact"/>
    <property type="match status" value="1"/>
</dbReference>
<dbReference type="NCBIfam" id="NF001756">
    <property type="entry name" value="PRK00484.1"/>
    <property type="match status" value="1"/>
</dbReference>
<dbReference type="PANTHER" id="PTHR42918:SF15">
    <property type="entry name" value="LYSINE--TRNA LIGASE, CHLOROPLASTIC_MITOCHONDRIAL"/>
    <property type="match status" value="1"/>
</dbReference>
<dbReference type="PANTHER" id="PTHR42918">
    <property type="entry name" value="LYSYL-TRNA SYNTHETASE"/>
    <property type="match status" value="1"/>
</dbReference>
<dbReference type="Pfam" id="PF00152">
    <property type="entry name" value="tRNA-synt_2"/>
    <property type="match status" value="1"/>
</dbReference>
<dbReference type="Pfam" id="PF01336">
    <property type="entry name" value="tRNA_anti-codon"/>
    <property type="match status" value="1"/>
</dbReference>
<dbReference type="PIRSF" id="PIRSF039101">
    <property type="entry name" value="LysRS2"/>
    <property type="match status" value="1"/>
</dbReference>
<dbReference type="PRINTS" id="PR00982">
    <property type="entry name" value="TRNASYNTHLYS"/>
</dbReference>
<dbReference type="SUPFAM" id="SSF55681">
    <property type="entry name" value="Class II aaRS and biotin synthetases"/>
    <property type="match status" value="1"/>
</dbReference>
<dbReference type="SUPFAM" id="SSF50249">
    <property type="entry name" value="Nucleic acid-binding proteins"/>
    <property type="match status" value="1"/>
</dbReference>
<dbReference type="PROSITE" id="PS50862">
    <property type="entry name" value="AA_TRNA_LIGASE_II"/>
    <property type="match status" value="1"/>
</dbReference>
<organism>
    <name type="scientific">Bacillus thuringiensis (strain Al Hakam)</name>
    <dbReference type="NCBI Taxonomy" id="412694"/>
    <lineage>
        <taxon>Bacteria</taxon>
        <taxon>Bacillati</taxon>
        <taxon>Bacillota</taxon>
        <taxon>Bacilli</taxon>
        <taxon>Bacillales</taxon>
        <taxon>Bacillaceae</taxon>
        <taxon>Bacillus</taxon>
        <taxon>Bacillus cereus group</taxon>
    </lineage>
</organism>
<proteinExistence type="inferred from homology"/>
<accession>A0R8E9</accession>
<gene>
    <name evidence="1" type="primary">lysS</name>
    <name type="ordered locus">BALH_0075</name>
</gene>
<keyword id="KW-0030">Aminoacyl-tRNA synthetase</keyword>
<keyword id="KW-0067">ATP-binding</keyword>
<keyword id="KW-0963">Cytoplasm</keyword>
<keyword id="KW-0436">Ligase</keyword>
<keyword id="KW-0460">Magnesium</keyword>
<keyword id="KW-0479">Metal-binding</keyword>
<keyword id="KW-0547">Nucleotide-binding</keyword>
<keyword id="KW-0648">Protein biosynthesis</keyword>
<reference key="1">
    <citation type="journal article" date="2007" name="J. Bacteriol.">
        <title>The complete genome sequence of Bacillus thuringiensis Al Hakam.</title>
        <authorList>
            <person name="Challacombe J.F."/>
            <person name="Altherr M.R."/>
            <person name="Xie G."/>
            <person name="Bhotika S.S."/>
            <person name="Brown N."/>
            <person name="Bruce D."/>
            <person name="Campbell C.S."/>
            <person name="Campbell M.L."/>
            <person name="Chen J."/>
            <person name="Chertkov O."/>
            <person name="Cleland C."/>
            <person name="Dimitrijevic M."/>
            <person name="Doggett N.A."/>
            <person name="Fawcett J.J."/>
            <person name="Glavina T."/>
            <person name="Goodwin L.A."/>
            <person name="Green L.D."/>
            <person name="Han C.S."/>
            <person name="Hill K.K."/>
            <person name="Hitchcock P."/>
            <person name="Jackson P.J."/>
            <person name="Keim P."/>
            <person name="Kewalramani A.R."/>
            <person name="Longmire J."/>
            <person name="Lucas S."/>
            <person name="Malfatti S."/>
            <person name="Martinez D."/>
            <person name="McMurry K."/>
            <person name="Meincke L.J."/>
            <person name="Misra M."/>
            <person name="Moseman B.L."/>
            <person name="Mundt M."/>
            <person name="Munk A.C."/>
            <person name="Okinaka R.T."/>
            <person name="Parson-Quintana B."/>
            <person name="Reilly L.P."/>
            <person name="Richardson P."/>
            <person name="Robinson D.L."/>
            <person name="Saunders E."/>
            <person name="Tapia R."/>
            <person name="Tesmer J.G."/>
            <person name="Thayer N."/>
            <person name="Thompson L.S."/>
            <person name="Tice H."/>
            <person name="Ticknor L.O."/>
            <person name="Wills P.L."/>
            <person name="Gilna P."/>
            <person name="Brettin T.S."/>
        </authorList>
    </citation>
    <scope>NUCLEOTIDE SEQUENCE [LARGE SCALE GENOMIC DNA]</scope>
    <source>
        <strain>Al Hakam</strain>
    </source>
</reference>
<feature type="chain" id="PRO_1000012841" description="Lysine--tRNA ligase">
    <location>
        <begin position="1"/>
        <end position="499"/>
    </location>
</feature>
<feature type="binding site" evidence="1">
    <location>
        <position position="408"/>
    </location>
    <ligand>
        <name>Mg(2+)</name>
        <dbReference type="ChEBI" id="CHEBI:18420"/>
        <label>1</label>
    </ligand>
</feature>
<feature type="binding site" evidence="1">
    <location>
        <position position="415"/>
    </location>
    <ligand>
        <name>Mg(2+)</name>
        <dbReference type="ChEBI" id="CHEBI:18420"/>
        <label>1</label>
    </ligand>
</feature>
<feature type="binding site" evidence="1">
    <location>
        <position position="415"/>
    </location>
    <ligand>
        <name>Mg(2+)</name>
        <dbReference type="ChEBI" id="CHEBI:18420"/>
        <label>2</label>
    </ligand>
</feature>
<evidence type="ECO:0000255" key="1">
    <source>
        <dbReference type="HAMAP-Rule" id="MF_00252"/>
    </source>
</evidence>
<protein>
    <recommendedName>
        <fullName evidence="1">Lysine--tRNA ligase</fullName>
        <ecNumber evidence="1">6.1.1.6</ecNumber>
    </recommendedName>
    <alternativeName>
        <fullName evidence="1">Lysyl-tRNA synthetase</fullName>
        <shortName evidence="1">LysRS</shortName>
    </alternativeName>
</protein>
<name>SYK_BACAH</name>